<proteinExistence type="predicted"/>
<gene>
    <name type="ordered locus">RBE_1220</name>
</gene>
<organism>
    <name type="scientific">Rickettsia bellii (strain RML369-C)</name>
    <dbReference type="NCBI Taxonomy" id="336407"/>
    <lineage>
        <taxon>Bacteria</taxon>
        <taxon>Pseudomonadati</taxon>
        <taxon>Pseudomonadota</taxon>
        <taxon>Alphaproteobacteria</taxon>
        <taxon>Rickettsiales</taxon>
        <taxon>Rickettsiaceae</taxon>
        <taxon>Rickettsieae</taxon>
        <taxon>Rickettsia</taxon>
        <taxon>belli group</taxon>
    </lineage>
</organism>
<keyword id="KW-0040">ANK repeat</keyword>
<keyword id="KW-0677">Repeat</keyword>
<feature type="chain" id="PRO_0000280925" description="Putative ankyrin repeat protein RBE_1220">
    <location>
        <begin position="1"/>
        <end position="154"/>
    </location>
</feature>
<feature type="repeat" description="ANK 1">
    <location>
        <begin position="78"/>
        <end position="108"/>
    </location>
</feature>
<feature type="repeat" description="ANK 2">
    <location>
        <begin position="113"/>
        <end position="142"/>
    </location>
</feature>
<reference key="1">
    <citation type="journal article" date="2006" name="PLoS Genet.">
        <title>Genome sequence of Rickettsia bellii illuminates the role of amoebae in gene exchanges between intracellular pathogens.</title>
        <authorList>
            <person name="Ogata H."/>
            <person name="La Scola B."/>
            <person name="Audic S."/>
            <person name="Renesto P."/>
            <person name="Blanc G."/>
            <person name="Robert C."/>
            <person name="Fournier P.-E."/>
            <person name="Claverie J.-M."/>
            <person name="Raoult D."/>
        </authorList>
    </citation>
    <scope>NUCLEOTIDE SEQUENCE [LARGE SCALE GENOMIC DNA]</scope>
    <source>
        <strain>RML369-C</strain>
    </source>
</reference>
<name>Y1220_RICBR</name>
<protein>
    <recommendedName>
        <fullName>Putative ankyrin repeat protein RBE_1220</fullName>
    </recommendedName>
</protein>
<sequence>MLEESKALFLELYKEKKKNEWLDAWTDEVMSLVQQQYSNYKLDGILQEAARHDLLPVIENYITRGGNLHIVVLDECGEKVNILNVAAANNSVTVINYLLDNNIFNVDQRVSENSRTALHSAVKENAMESTKFLLKKEQILILNLNINISDLKVK</sequence>
<accession>Q1RH63</accession>
<dbReference type="EMBL" id="CP000087">
    <property type="protein sequence ID" value="ABE05301.1"/>
    <property type="molecule type" value="Genomic_DNA"/>
</dbReference>
<dbReference type="RefSeq" id="WP_011477877.1">
    <property type="nucleotide sequence ID" value="NC_007940.1"/>
</dbReference>
<dbReference type="SMR" id="Q1RH63"/>
<dbReference type="KEGG" id="rbe:RBE_1220"/>
<dbReference type="HOGENOM" id="CLU_1990985_0_0_5"/>
<dbReference type="OrthoDB" id="9984272at2"/>
<dbReference type="Proteomes" id="UP000001951">
    <property type="component" value="Chromosome"/>
</dbReference>
<dbReference type="Gene3D" id="1.25.40.20">
    <property type="entry name" value="Ankyrin repeat-containing domain"/>
    <property type="match status" value="1"/>
</dbReference>
<dbReference type="InterPro" id="IPR002110">
    <property type="entry name" value="Ankyrin_rpt"/>
</dbReference>
<dbReference type="InterPro" id="IPR036770">
    <property type="entry name" value="Ankyrin_rpt-contain_sf"/>
</dbReference>
<dbReference type="Pfam" id="PF12796">
    <property type="entry name" value="Ank_2"/>
    <property type="match status" value="1"/>
</dbReference>
<dbReference type="SMART" id="SM00248">
    <property type="entry name" value="ANK"/>
    <property type="match status" value="2"/>
</dbReference>
<dbReference type="SUPFAM" id="SSF48403">
    <property type="entry name" value="Ankyrin repeat"/>
    <property type="match status" value="1"/>
</dbReference>
<dbReference type="PROSITE" id="PS50297">
    <property type="entry name" value="ANK_REP_REGION"/>
    <property type="match status" value="1"/>
</dbReference>